<feature type="chain" id="PRO_0000062731" description="Cell division protein FtsA">
    <location>
        <begin position="1"/>
        <end position="418"/>
    </location>
</feature>
<dbReference type="EMBL" id="BA000003">
    <property type="protein sequence ID" value="BAB12930.1"/>
    <property type="molecule type" value="Genomic_DNA"/>
</dbReference>
<dbReference type="RefSeq" id="NP_240044.1">
    <property type="nucleotide sequence ID" value="NC_002528.1"/>
</dbReference>
<dbReference type="RefSeq" id="WP_009874171.1">
    <property type="nucleotide sequence ID" value="NZ_AP036055.1"/>
</dbReference>
<dbReference type="SMR" id="P57309"/>
<dbReference type="STRING" id="563178.BUAP5A_210"/>
<dbReference type="EnsemblBacteria" id="BAB12930">
    <property type="protein sequence ID" value="BAB12930"/>
    <property type="gene ID" value="BAB12930"/>
</dbReference>
<dbReference type="KEGG" id="buc:BU213"/>
<dbReference type="PATRIC" id="fig|107806.10.peg.225"/>
<dbReference type="eggNOG" id="COG0849">
    <property type="taxonomic scope" value="Bacteria"/>
</dbReference>
<dbReference type="HOGENOM" id="CLU_037850_3_2_6"/>
<dbReference type="Proteomes" id="UP000001806">
    <property type="component" value="Chromosome"/>
</dbReference>
<dbReference type="GO" id="GO:0032153">
    <property type="term" value="C:cell division site"/>
    <property type="evidence" value="ECO:0007669"/>
    <property type="project" value="UniProtKB-UniRule"/>
</dbReference>
<dbReference type="GO" id="GO:0009898">
    <property type="term" value="C:cytoplasmic side of plasma membrane"/>
    <property type="evidence" value="ECO:0007669"/>
    <property type="project" value="UniProtKB-UniRule"/>
</dbReference>
<dbReference type="GO" id="GO:0043093">
    <property type="term" value="P:FtsZ-dependent cytokinesis"/>
    <property type="evidence" value="ECO:0007669"/>
    <property type="project" value="UniProtKB-UniRule"/>
</dbReference>
<dbReference type="CDD" id="cd24048">
    <property type="entry name" value="ASKHA_NBD_FtsA"/>
    <property type="match status" value="1"/>
</dbReference>
<dbReference type="FunFam" id="3.30.1490.110:FF:000001">
    <property type="entry name" value="Cell division protein FtsA"/>
    <property type="match status" value="1"/>
</dbReference>
<dbReference type="Gene3D" id="3.30.1490.110">
    <property type="match status" value="1"/>
</dbReference>
<dbReference type="Gene3D" id="3.30.420.40">
    <property type="match status" value="1"/>
</dbReference>
<dbReference type="HAMAP" id="MF_02033">
    <property type="entry name" value="FtsA"/>
    <property type="match status" value="1"/>
</dbReference>
<dbReference type="InterPro" id="IPR043129">
    <property type="entry name" value="ATPase_NBD"/>
</dbReference>
<dbReference type="InterPro" id="IPR020823">
    <property type="entry name" value="Cell_div_FtsA"/>
</dbReference>
<dbReference type="InterPro" id="IPR050696">
    <property type="entry name" value="FtsA/MreB"/>
</dbReference>
<dbReference type="InterPro" id="IPR003494">
    <property type="entry name" value="SHS2_FtsA"/>
</dbReference>
<dbReference type="NCBIfam" id="TIGR01174">
    <property type="entry name" value="ftsA"/>
    <property type="match status" value="1"/>
</dbReference>
<dbReference type="NCBIfam" id="NF007009">
    <property type="entry name" value="PRK09472.1"/>
    <property type="match status" value="1"/>
</dbReference>
<dbReference type="PANTHER" id="PTHR32432:SF4">
    <property type="entry name" value="CELL DIVISION PROTEIN FTSA"/>
    <property type="match status" value="1"/>
</dbReference>
<dbReference type="PANTHER" id="PTHR32432">
    <property type="entry name" value="CELL DIVISION PROTEIN FTSA-RELATED"/>
    <property type="match status" value="1"/>
</dbReference>
<dbReference type="Pfam" id="PF14450">
    <property type="entry name" value="FtsA"/>
    <property type="match status" value="1"/>
</dbReference>
<dbReference type="Pfam" id="PF02491">
    <property type="entry name" value="SHS2_FTSA"/>
    <property type="match status" value="1"/>
</dbReference>
<dbReference type="PIRSF" id="PIRSF003101">
    <property type="entry name" value="FtsA"/>
    <property type="match status" value="1"/>
</dbReference>
<dbReference type="SMART" id="SM00842">
    <property type="entry name" value="FtsA"/>
    <property type="match status" value="1"/>
</dbReference>
<dbReference type="SUPFAM" id="SSF53067">
    <property type="entry name" value="Actin-like ATPase domain"/>
    <property type="match status" value="2"/>
</dbReference>
<comment type="function">
    <text evidence="1">Cell division protein that is involved in the assembly of the Z ring. May serve as a membrane anchor for the Z ring.</text>
</comment>
<comment type="subunit">
    <text evidence="1">Self-interacts. Interacts with FtsZ.</text>
</comment>
<comment type="subcellular location">
    <subcellularLocation>
        <location evidence="1">Cell inner membrane</location>
        <topology evidence="1">Peripheral membrane protein</topology>
        <orientation evidence="1">Cytoplasmic side</orientation>
    </subcellularLocation>
    <text evidence="1">Localizes to the Z ring in an FtsZ-dependent manner. Targeted to the membrane through a conserved C-terminal amphipathic helix.</text>
</comment>
<comment type="similarity">
    <text evidence="1">Belongs to the FtsA/MreB family.</text>
</comment>
<proteinExistence type="inferred from homology"/>
<keyword id="KW-0131">Cell cycle</keyword>
<keyword id="KW-0132">Cell division</keyword>
<keyword id="KW-0997">Cell inner membrane</keyword>
<keyword id="KW-1003">Cell membrane</keyword>
<keyword id="KW-0472">Membrane</keyword>
<keyword id="KW-1185">Reference proteome</keyword>
<organism>
    <name type="scientific">Buchnera aphidicola subsp. Acyrthosiphon pisum (strain APS)</name>
    <name type="common">Acyrthosiphon pisum symbiotic bacterium</name>
    <dbReference type="NCBI Taxonomy" id="107806"/>
    <lineage>
        <taxon>Bacteria</taxon>
        <taxon>Pseudomonadati</taxon>
        <taxon>Pseudomonadota</taxon>
        <taxon>Gammaproteobacteria</taxon>
        <taxon>Enterobacterales</taxon>
        <taxon>Erwiniaceae</taxon>
        <taxon>Buchnera</taxon>
    </lineage>
</organism>
<evidence type="ECO:0000255" key="1">
    <source>
        <dbReference type="HAMAP-Rule" id="MF_02033"/>
    </source>
</evidence>
<protein>
    <recommendedName>
        <fullName evidence="1">Cell division protein FtsA</fullName>
    </recommendedName>
</protein>
<name>FTSA_BUCAI</name>
<accession>P57309</accession>
<sequence length="418" mass="46676">MIISKDRKLVVGLEIGTTKVVTLVGEVLIDDNIKIIGFGTCLSKGIDKGKINNLDLIVSCIQESINKAEIMADCQITSVYLSLSNKYINCQNEIGIIPISDDEVTKEDIEHVIHIAQSVQILNEHHILHVIPQEYSIDQQYGIKNPIGLSGVRMQVKVHLITCHQNMARNIIKAVEKCDVKVDQVIFSGLASSKAVLTEDECNLGVCMIDIGGGTIDFTIYIDGSIKYSQVIPYAGNIVTSDISYAFSTSRDNAENIKIKYGSVKKPPLGSSKNIDFSDINCNFQQNLQQDALIDVIESRYVELLSLVQDQIVHLQKKLHKKGEKYELLSGIVLTGGGSNISCLTDCAEKVFQKKVRVAKPFNISGLIEKITEPCYSTVIGLLHYGKESYINIDKKKKEHSFFEIIFKRINNWFKKEF</sequence>
<gene>
    <name evidence="1" type="primary">ftsA</name>
    <name type="ordered locus">BU213</name>
</gene>
<reference key="1">
    <citation type="journal article" date="2000" name="Nature">
        <title>Genome sequence of the endocellular bacterial symbiont of aphids Buchnera sp. APS.</title>
        <authorList>
            <person name="Shigenobu S."/>
            <person name="Watanabe H."/>
            <person name="Hattori M."/>
            <person name="Sakaki Y."/>
            <person name="Ishikawa H."/>
        </authorList>
    </citation>
    <scope>NUCLEOTIDE SEQUENCE [LARGE SCALE GENOMIC DNA]</scope>
    <source>
        <strain>APS</strain>
    </source>
</reference>